<keyword id="KW-0963">Cytoplasm</keyword>
<keyword id="KW-0444">Lipid biosynthesis</keyword>
<keyword id="KW-0443">Lipid metabolism</keyword>
<keyword id="KW-0520">NAD</keyword>
<keyword id="KW-0521">NADP</keyword>
<keyword id="KW-0547">Nucleotide-binding</keyword>
<keyword id="KW-0560">Oxidoreductase</keyword>
<keyword id="KW-0594">Phospholipid biosynthesis</keyword>
<keyword id="KW-1208">Phospholipid metabolism</keyword>
<keyword id="KW-1185">Reference proteome</keyword>
<reference key="1">
    <citation type="journal article" date="1998" name="Nature">
        <title>The genome sequence of Rickettsia prowazekii and the origin of mitochondria.</title>
        <authorList>
            <person name="Andersson S.G.E."/>
            <person name="Zomorodipour A."/>
            <person name="Andersson J.O."/>
            <person name="Sicheritz-Ponten T."/>
            <person name="Alsmark U.C.M."/>
            <person name="Podowski R.M."/>
            <person name="Naeslund A.K."/>
            <person name="Eriksson A.-S."/>
            <person name="Winkler H.H."/>
            <person name="Kurland C.G."/>
        </authorList>
    </citation>
    <scope>NUCLEOTIDE SEQUENCE [LARGE SCALE GENOMIC DNA]</scope>
    <source>
        <strain>Madrid E</strain>
    </source>
</reference>
<gene>
    <name evidence="1" type="primary">gpsA</name>
    <name type="ordered locus">RP442</name>
</gene>
<sequence>MNKFKNIAVYGGGSFGTSLASLVARNCNNVTLFLRDEIILKEILYKKTNAQYLGDIELPTNLQATTNLSVIKDFELIIIAVPSYAFDDSIKLLKTYGISKEHTILVATKGLADNPTELFSDRLNTLLPDNPIGFLSGPNLAKELAKNLPASASIASLDIDIANKIAYNFSSKTFSTNTTIDIVTLQIAGALKNIFAIKSGIDLAREQGANSRATLIVGALKEITTLSKVLGGMQKNSDILLEAGVLGDLVLTCYSLGSRNTKFGYEFEISRDKKKFLCEYKELVEGREALKLVLDLIKKYNLHMPIVAEVASLILI</sequence>
<protein>
    <recommendedName>
        <fullName evidence="1">Glycerol-3-phosphate dehydrogenase [NAD(P)+]</fullName>
        <ecNumber evidence="1">1.1.1.94</ecNumber>
    </recommendedName>
    <alternativeName>
        <fullName evidence="1">NAD(P)(+)-dependent glycerol-3-phosphate dehydrogenase</fullName>
    </alternativeName>
    <alternativeName>
        <fullName evidence="1">NAD(P)H-dependent dihydroxyacetone-phosphate reductase</fullName>
    </alternativeName>
</protein>
<evidence type="ECO:0000255" key="1">
    <source>
        <dbReference type="HAMAP-Rule" id="MF_00394"/>
    </source>
</evidence>
<comment type="function">
    <text evidence="1">Catalyzes the reduction of the glycolytic intermediate dihydroxyacetone phosphate (DHAP) to sn-glycerol 3-phosphate (G3P), the key precursor for phospholipid synthesis.</text>
</comment>
<comment type="catalytic activity">
    <reaction evidence="1">
        <text>sn-glycerol 3-phosphate + NAD(+) = dihydroxyacetone phosphate + NADH + H(+)</text>
        <dbReference type="Rhea" id="RHEA:11092"/>
        <dbReference type="ChEBI" id="CHEBI:15378"/>
        <dbReference type="ChEBI" id="CHEBI:57540"/>
        <dbReference type="ChEBI" id="CHEBI:57597"/>
        <dbReference type="ChEBI" id="CHEBI:57642"/>
        <dbReference type="ChEBI" id="CHEBI:57945"/>
        <dbReference type="EC" id="1.1.1.94"/>
    </reaction>
    <physiologicalReaction direction="right-to-left" evidence="1">
        <dbReference type="Rhea" id="RHEA:11094"/>
    </physiologicalReaction>
</comment>
<comment type="catalytic activity">
    <reaction evidence="1">
        <text>sn-glycerol 3-phosphate + NADP(+) = dihydroxyacetone phosphate + NADPH + H(+)</text>
        <dbReference type="Rhea" id="RHEA:11096"/>
        <dbReference type="ChEBI" id="CHEBI:15378"/>
        <dbReference type="ChEBI" id="CHEBI:57597"/>
        <dbReference type="ChEBI" id="CHEBI:57642"/>
        <dbReference type="ChEBI" id="CHEBI:57783"/>
        <dbReference type="ChEBI" id="CHEBI:58349"/>
        <dbReference type="EC" id="1.1.1.94"/>
    </reaction>
    <physiologicalReaction direction="right-to-left" evidence="1">
        <dbReference type="Rhea" id="RHEA:11098"/>
    </physiologicalReaction>
</comment>
<comment type="pathway">
    <text evidence="1">Membrane lipid metabolism; glycerophospholipid metabolism.</text>
</comment>
<comment type="subcellular location">
    <subcellularLocation>
        <location evidence="1">Cytoplasm</location>
    </subcellularLocation>
</comment>
<comment type="similarity">
    <text evidence="1">Belongs to the NAD-dependent glycerol-3-phosphate dehydrogenase family.</text>
</comment>
<proteinExistence type="inferred from homology"/>
<accession>Q9ZDA0</accession>
<name>GPDA_RICPR</name>
<dbReference type="EC" id="1.1.1.94" evidence="1"/>
<dbReference type="EMBL" id="AJ235271">
    <property type="protein sequence ID" value="CAA14899.1"/>
    <property type="molecule type" value="Genomic_DNA"/>
</dbReference>
<dbReference type="PIR" id="A71703">
    <property type="entry name" value="A71703"/>
</dbReference>
<dbReference type="RefSeq" id="NP_220823.1">
    <property type="nucleotide sequence ID" value="NC_000963.1"/>
</dbReference>
<dbReference type="RefSeq" id="WP_004599474.1">
    <property type="nucleotide sequence ID" value="NC_000963.1"/>
</dbReference>
<dbReference type="SMR" id="Q9ZDA0"/>
<dbReference type="STRING" id="272947.gene:17555522"/>
<dbReference type="EnsemblBacteria" id="CAA14899">
    <property type="protein sequence ID" value="CAA14899"/>
    <property type="gene ID" value="CAA14899"/>
</dbReference>
<dbReference type="KEGG" id="rpr:RP442"/>
<dbReference type="PATRIC" id="fig|272947.5.peg.455"/>
<dbReference type="eggNOG" id="COG0240">
    <property type="taxonomic scope" value="Bacteria"/>
</dbReference>
<dbReference type="HOGENOM" id="CLU_033449_0_0_5"/>
<dbReference type="OrthoDB" id="9812273at2"/>
<dbReference type="BRENDA" id="1.1.1.94">
    <property type="organism ID" value="5447"/>
</dbReference>
<dbReference type="UniPathway" id="UPA00940"/>
<dbReference type="Proteomes" id="UP000002480">
    <property type="component" value="Chromosome"/>
</dbReference>
<dbReference type="GO" id="GO:0005829">
    <property type="term" value="C:cytosol"/>
    <property type="evidence" value="ECO:0007669"/>
    <property type="project" value="TreeGrafter"/>
</dbReference>
<dbReference type="GO" id="GO:0047952">
    <property type="term" value="F:glycerol-3-phosphate dehydrogenase [NAD(P)+] activity"/>
    <property type="evidence" value="ECO:0007669"/>
    <property type="project" value="UniProtKB-UniRule"/>
</dbReference>
<dbReference type="GO" id="GO:0051287">
    <property type="term" value="F:NAD binding"/>
    <property type="evidence" value="ECO:0007669"/>
    <property type="project" value="InterPro"/>
</dbReference>
<dbReference type="GO" id="GO:0005975">
    <property type="term" value="P:carbohydrate metabolic process"/>
    <property type="evidence" value="ECO:0007669"/>
    <property type="project" value="InterPro"/>
</dbReference>
<dbReference type="GO" id="GO:0046167">
    <property type="term" value="P:glycerol-3-phosphate biosynthetic process"/>
    <property type="evidence" value="ECO:0007669"/>
    <property type="project" value="UniProtKB-UniRule"/>
</dbReference>
<dbReference type="GO" id="GO:0046168">
    <property type="term" value="P:glycerol-3-phosphate catabolic process"/>
    <property type="evidence" value="ECO:0007669"/>
    <property type="project" value="InterPro"/>
</dbReference>
<dbReference type="GO" id="GO:0006650">
    <property type="term" value="P:glycerophospholipid metabolic process"/>
    <property type="evidence" value="ECO:0007669"/>
    <property type="project" value="UniProtKB-UniRule"/>
</dbReference>
<dbReference type="GO" id="GO:0008654">
    <property type="term" value="P:phospholipid biosynthetic process"/>
    <property type="evidence" value="ECO:0007669"/>
    <property type="project" value="UniProtKB-KW"/>
</dbReference>
<dbReference type="Gene3D" id="1.10.1040.10">
    <property type="entry name" value="N-(1-d-carboxylethyl)-l-norvaline Dehydrogenase, domain 2"/>
    <property type="match status" value="1"/>
</dbReference>
<dbReference type="Gene3D" id="3.40.50.720">
    <property type="entry name" value="NAD(P)-binding Rossmann-like Domain"/>
    <property type="match status" value="1"/>
</dbReference>
<dbReference type="HAMAP" id="MF_00394">
    <property type="entry name" value="NAD_Glyc3P_dehydrog"/>
    <property type="match status" value="1"/>
</dbReference>
<dbReference type="InterPro" id="IPR008927">
    <property type="entry name" value="6-PGluconate_DH-like_C_sf"/>
</dbReference>
<dbReference type="InterPro" id="IPR013328">
    <property type="entry name" value="6PGD_dom2"/>
</dbReference>
<dbReference type="InterPro" id="IPR006168">
    <property type="entry name" value="G3P_DH_NAD-dep"/>
</dbReference>
<dbReference type="InterPro" id="IPR006109">
    <property type="entry name" value="G3P_DH_NAD-dep_C"/>
</dbReference>
<dbReference type="InterPro" id="IPR011128">
    <property type="entry name" value="G3P_DH_NAD-dep_N"/>
</dbReference>
<dbReference type="InterPro" id="IPR036291">
    <property type="entry name" value="NAD(P)-bd_dom_sf"/>
</dbReference>
<dbReference type="NCBIfam" id="NF000947">
    <property type="entry name" value="PRK00094.2-5"/>
    <property type="match status" value="1"/>
</dbReference>
<dbReference type="PANTHER" id="PTHR11728">
    <property type="entry name" value="GLYCEROL-3-PHOSPHATE DEHYDROGENASE"/>
    <property type="match status" value="1"/>
</dbReference>
<dbReference type="PANTHER" id="PTHR11728:SF1">
    <property type="entry name" value="GLYCEROL-3-PHOSPHATE DEHYDROGENASE [NAD(+)] 2, CHLOROPLASTIC"/>
    <property type="match status" value="1"/>
</dbReference>
<dbReference type="Pfam" id="PF07479">
    <property type="entry name" value="NAD_Gly3P_dh_C"/>
    <property type="match status" value="1"/>
</dbReference>
<dbReference type="Pfam" id="PF01210">
    <property type="entry name" value="NAD_Gly3P_dh_N"/>
    <property type="match status" value="1"/>
</dbReference>
<dbReference type="PIRSF" id="PIRSF000114">
    <property type="entry name" value="Glycerol-3-P_dh"/>
    <property type="match status" value="1"/>
</dbReference>
<dbReference type="PRINTS" id="PR00077">
    <property type="entry name" value="GPDHDRGNASE"/>
</dbReference>
<dbReference type="SUPFAM" id="SSF48179">
    <property type="entry name" value="6-phosphogluconate dehydrogenase C-terminal domain-like"/>
    <property type="match status" value="1"/>
</dbReference>
<dbReference type="SUPFAM" id="SSF51735">
    <property type="entry name" value="NAD(P)-binding Rossmann-fold domains"/>
    <property type="match status" value="1"/>
</dbReference>
<dbReference type="PROSITE" id="PS00957">
    <property type="entry name" value="NAD_G3PDH"/>
    <property type="match status" value="1"/>
</dbReference>
<organism>
    <name type="scientific">Rickettsia prowazekii (strain Madrid E)</name>
    <dbReference type="NCBI Taxonomy" id="272947"/>
    <lineage>
        <taxon>Bacteria</taxon>
        <taxon>Pseudomonadati</taxon>
        <taxon>Pseudomonadota</taxon>
        <taxon>Alphaproteobacteria</taxon>
        <taxon>Rickettsiales</taxon>
        <taxon>Rickettsiaceae</taxon>
        <taxon>Rickettsieae</taxon>
        <taxon>Rickettsia</taxon>
        <taxon>typhus group</taxon>
    </lineage>
</organism>
<feature type="chain" id="PRO_0000138017" description="Glycerol-3-phosphate dehydrogenase [NAD(P)+]">
    <location>
        <begin position="1"/>
        <end position="316"/>
    </location>
</feature>
<feature type="active site" description="Proton acceptor" evidence="1">
    <location>
        <position position="192"/>
    </location>
</feature>
<feature type="binding site" evidence="1">
    <location>
        <position position="14"/>
    </location>
    <ligand>
        <name>NADPH</name>
        <dbReference type="ChEBI" id="CHEBI:57783"/>
    </ligand>
</feature>
<feature type="binding site" evidence="1">
    <location>
        <position position="15"/>
    </location>
    <ligand>
        <name>NADPH</name>
        <dbReference type="ChEBI" id="CHEBI:57783"/>
    </ligand>
</feature>
<feature type="binding site" evidence="1">
    <location>
        <position position="35"/>
    </location>
    <ligand>
        <name>NADPH</name>
        <dbReference type="ChEBI" id="CHEBI:57783"/>
    </ligand>
</feature>
<feature type="binding site" evidence="1">
    <location>
        <position position="109"/>
    </location>
    <ligand>
        <name>NADPH</name>
        <dbReference type="ChEBI" id="CHEBI:57783"/>
    </ligand>
</feature>
<feature type="binding site" evidence="1">
    <location>
        <position position="109"/>
    </location>
    <ligand>
        <name>sn-glycerol 3-phosphate</name>
        <dbReference type="ChEBI" id="CHEBI:57597"/>
    </ligand>
</feature>
<feature type="binding site" evidence="1">
    <location>
        <position position="137"/>
    </location>
    <ligand>
        <name>sn-glycerol 3-phosphate</name>
        <dbReference type="ChEBI" id="CHEBI:57597"/>
    </ligand>
</feature>
<feature type="binding site" evidence="1">
    <location>
        <position position="141"/>
    </location>
    <ligand>
        <name>NADPH</name>
        <dbReference type="ChEBI" id="CHEBI:57783"/>
    </ligand>
</feature>
<feature type="binding site" evidence="1">
    <location>
        <position position="192"/>
    </location>
    <ligand>
        <name>sn-glycerol 3-phosphate</name>
        <dbReference type="ChEBI" id="CHEBI:57597"/>
    </ligand>
</feature>
<feature type="binding site" evidence="1">
    <location>
        <position position="248"/>
    </location>
    <ligand>
        <name>sn-glycerol 3-phosphate</name>
        <dbReference type="ChEBI" id="CHEBI:57597"/>
    </ligand>
</feature>
<feature type="binding site" evidence="1">
    <location>
        <position position="258"/>
    </location>
    <ligand>
        <name>sn-glycerol 3-phosphate</name>
        <dbReference type="ChEBI" id="CHEBI:57597"/>
    </ligand>
</feature>
<feature type="binding site" evidence="1">
    <location>
        <position position="259"/>
    </location>
    <ligand>
        <name>NADPH</name>
        <dbReference type="ChEBI" id="CHEBI:57783"/>
    </ligand>
</feature>
<feature type="binding site" evidence="1">
    <location>
        <position position="259"/>
    </location>
    <ligand>
        <name>sn-glycerol 3-phosphate</name>
        <dbReference type="ChEBI" id="CHEBI:57597"/>
    </ligand>
</feature>
<feature type="binding site" evidence="1">
    <location>
        <position position="260"/>
    </location>
    <ligand>
        <name>sn-glycerol 3-phosphate</name>
        <dbReference type="ChEBI" id="CHEBI:57597"/>
    </ligand>
</feature>
<feature type="binding site" evidence="1">
    <location>
        <position position="283"/>
    </location>
    <ligand>
        <name>NADPH</name>
        <dbReference type="ChEBI" id="CHEBI:57783"/>
    </ligand>
</feature>
<feature type="binding site" evidence="1">
    <location>
        <position position="285"/>
    </location>
    <ligand>
        <name>NADPH</name>
        <dbReference type="ChEBI" id="CHEBI:57783"/>
    </ligand>
</feature>